<accession>Q4U4D2</accession>
<dbReference type="EMBL" id="DQ013043">
    <property type="protein sequence ID" value="AAY34941.2"/>
    <property type="molecule type" value="mRNA"/>
</dbReference>
<dbReference type="SMR" id="Q4U4D2"/>
<dbReference type="GlyCosmos" id="Q4U4D2">
    <property type="glycosylation" value="1 site, No reported glycans"/>
</dbReference>
<dbReference type="GO" id="GO:0005886">
    <property type="term" value="C:plasma membrane"/>
    <property type="evidence" value="ECO:0000250"/>
    <property type="project" value="UniProtKB"/>
</dbReference>
<dbReference type="GO" id="GO:0004930">
    <property type="term" value="F:G protein-coupled receptor activity"/>
    <property type="evidence" value="ECO:0007669"/>
    <property type="project" value="UniProtKB-KW"/>
</dbReference>
<dbReference type="GO" id="GO:0009881">
    <property type="term" value="F:photoreceptor activity"/>
    <property type="evidence" value="ECO:0007669"/>
    <property type="project" value="UniProtKB-KW"/>
</dbReference>
<dbReference type="GO" id="GO:0007602">
    <property type="term" value="P:phototransduction"/>
    <property type="evidence" value="ECO:0007669"/>
    <property type="project" value="UniProtKB-KW"/>
</dbReference>
<dbReference type="GO" id="GO:0007601">
    <property type="term" value="P:visual perception"/>
    <property type="evidence" value="ECO:0007669"/>
    <property type="project" value="InterPro"/>
</dbReference>
<dbReference type="CDD" id="cd15336">
    <property type="entry name" value="7tmA_Melanopsin"/>
    <property type="match status" value="1"/>
</dbReference>
<dbReference type="FunFam" id="1.20.1070.10:FF:000044">
    <property type="entry name" value="Opsin, ultraviolet-sensitive"/>
    <property type="match status" value="1"/>
</dbReference>
<dbReference type="Gene3D" id="1.20.1070.10">
    <property type="entry name" value="Rhodopsin 7-helix transmembrane proteins"/>
    <property type="match status" value="1"/>
</dbReference>
<dbReference type="InterPro" id="IPR050125">
    <property type="entry name" value="GPCR_opsins"/>
</dbReference>
<dbReference type="InterPro" id="IPR000276">
    <property type="entry name" value="GPCR_Rhodpsn"/>
</dbReference>
<dbReference type="InterPro" id="IPR017452">
    <property type="entry name" value="GPCR_Rhodpsn_7TM"/>
</dbReference>
<dbReference type="InterPro" id="IPR001760">
    <property type="entry name" value="Opsin"/>
</dbReference>
<dbReference type="InterPro" id="IPR027430">
    <property type="entry name" value="Retinal_BS"/>
</dbReference>
<dbReference type="PANTHER" id="PTHR24240">
    <property type="entry name" value="OPSIN"/>
    <property type="match status" value="1"/>
</dbReference>
<dbReference type="Pfam" id="PF00001">
    <property type="entry name" value="7tm_1"/>
    <property type="match status" value="1"/>
</dbReference>
<dbReference type="PRINTS" id="PR00237">
    <property type="entry name" value="GPCRRHODOPSN"/>
</dbReference>
<dbReference type="PRINTS" id="PR00238">
    <property type="entry name" value="OPSIN"/>
</dbReference>
<dbReference type="SMART" id="SM01381">
    <property type="entry name" value="7TM_GPCR_Srsx"/>
    <property type="match status" value="1"/>
</dbReference>
<dbReference type="SUPFAM" id="SSF81321">
    <property type="entry name" value="Family A G protein-coupled receptor-like"/>
    <property type="match status" value="1"/>
</dbReference>
<dbReference type="PROSITE" id="PS00237">
    <property type="entry name" value="G_PROTEIN_RECEP_F1_1"/>
    <property type="match status" value="1"/>
</dbReference>
<dbReference type="PROSITE" id="PS50262">
    <property type="entry name" value="G_PROTEIN_RECEP_F1_2"/>
    <property type="match status" value="1"/>
</dbReference>
<dbReference type="PROSITE" id="PS00238">
    <property type="entry name" value="OPSIN"/>
    <property type="match status" value="1"/>
</dbReference>
<keyword id="KW-1003">Cell membrane</keyword>
<keyword id="KW-0157">Chromophore</keyword>
<keyword id="KW-1015">Disulfide bond</keyword>
<keyword id="KW-0297">G-protein coupled receptor</keyword>
<keyword id="KW-0325">Glycoprotein</keyword>
<keyword id="KW-0472">Membrane</keyword>
<keyword id="KW-0600">Photoreceptor protein</keyword>
<keyword id="KW-0675">Receptor</keyword>
<keyword id="KW-0681">Retinal protein</keyword>
<keyword id="KW-0716">Sensory transduction</keyword>
<keyword id="KW-0807">Transducer</keyword>
<keyword id="KW-0812">Transmembrane</keyword>
<keyword id="KW-1133">Transmembrane helix</keyword>
<feature type="chain" id="PRO_0000271893" description="Melanopsin">
    <location>
        <begin position="1"/>
        <end position="475"/>
    </location>
</feature>
<feature type="topological domain" description="Extracellular" evidence="3">
    <location>
        <begin position="1"/>
        <end position="21"/>
    </location>
</feature>
<feature type="transmembrane region" description="Helical; Name=1" evidence="3">
    <location>
        <begin position="22"/>
        <end position="42"/>
    </location>
</feature>
<feature type="topological domain" description="Cytoplasmic" evidence="3">
    <location>
        <begin position="43"/>
        <end position="53"/>
    </location>
</feature>
<feature type="transmembrane region" description="Helical; Name=2" evidence="3">
    <location>
        <begin position="54"/>
        <end position="74"/>
    </location>
</feature>
<feature type="topological domain" description="Extracellular" evidence="3">
    <location>
        <begin position="75"/>
        <end position="90"/>
    </location>
</feature>
<feature type="transmembrane region" description="Helical; Name=3" evidence="3">
    <location>
        <begin position="91"/>
        <end position="111"/>
    </location>
</feature>
<feature type="topological domain" description="Cytoplasmic" evidence="3">
    <location>
        <begin position="112"/>
        <end position="134"/>
    </location>
</feature>
<feature type="transmembrane region" description="Helical; Name=4" evidence="3">
    <location>
        <begin position="135"/>
        <end position="155"/>
    </location>
</feature>
<feature type="topological domain" description="Extracellular" evidence="3">
    <location>
        <begin position="156"/>
        <end position="187"/>
    </location>
</feature>
<feature type="transmembrane region" description="Helical; Name=5" evidence="3">
    <location>
        <begin position="188"/>
        <end position="208"/>
    </location>
</feature>
<feature type="topological domain" description="Cytoplasmic" evidence="3">
    <location>
        <begin position="209"/>
        <end position="240"/>
    </location>
</feature>
<feature type="transmembrane region" description="Helical; Name=6" evidence="3">
    <location>
        <begin position="241"/>
        <end position="261"/>
    </location>
</feature>
<feature type="topological domain" description="Extracellular" evidence="3">
    <location>
        <begin position="262"/>
        <end position="276"/>
    </location>
</feature>
<feature type="transmembrane region" description="Helical; Name=7" evidence="3">
    <location>
        <begin position="277"/>
        <end position="297"/>
    </location>
</feature>
<feature type="topological domain" description="Cytoplasmic" evidence="3">
    <location>
        <begin position="298"/>
        <end position="475"/>
    </location>
</feature>
<feature type="region of interest" description="Disordered" evidence="5">
    <location>
        <begin position="370"/>
        <end position="390"/>
    </location>
</feature>
<feature type="region of interest" description="Disordered" evidence="5">
    <location>
        <begin position="445"/>
        <end position="475"/>
    </location>
</feature>
<feature type="compositionally biased region" description="Basic residues" evidence="5">
    <location>
        <begin position="375"/>
        <end position="384"/>
    </location>
</feature>
<feature type="compositionally biased region" description="Polar residues" evidence="5">
    <location>
        <begin position="445"/>
        <end position="454"/>
    </location>
</feature>
<feature type="compositionally biased region" description="Acidic residues" evidence="5">
    <location>
        <begin position="455"/>
        <end position="464"/>
    </location>
</feature>
<feature type="compositionally biased region" description="Basic and acidic residues" evidence="5">
    <location>
        <begin position="465"/>
        <end position="475"/>
    </location>
</feature>
<feature type="modified residue" description="N6-(retinylidene)lysine" evidence="1">
    <location>
        <position position="284"/>
    </location>
</feature>
<feature type="glycosylation site" description="N-linked (GlcNAc...) asparagine" evidence="3">
    <location>
        <position position="178"/>
    </location>
</feature>
<feature type="disulfide bond" evidence="4">
    <location>
        <begin position="89"/>
        <end position="167"/>
    </location>
</feature>
<gene>
    <name type="primary">OPN4</name>
</gene>
<reference evidence="7 8" key="1">
    <citation type="journal article" date="2006" name="Naturwissenschaften">
        <title>Isolation and characterization of melanopsin and pinopsin expression within photoreceptive sites of reptiles.</title>
        <authorList>
            <person name="Frigato E."/>
            <person name="Vallone D."/>
            <person name="Bertolucci C."/>
            <person name="Foulkes N.S."/>
        </authorList>
    </citation>
    <scope>NUCLEOTIDE SEQUENCE [MRNA]</scope>
    <scope>TISSUE SPECIFICITY</scope>
</reference>
<sequence length="475" mass="53068">MGTQHRIKVDVPDRVLYTVGSCVLVIGSIGITGNLLVLYAFYSNKRLRTPANYFIMNLAASDFLMSATQAPICFLNSMHTEWILGDIGCNFYVFCGALFGITSMMTLLAISVDRYCVITKPLQSIKRSSKKRSCIIIAFVWLYSLGWSVCPLFGWSSYIPEGLMISCTWDYVSYSPANRSYTMMLCCFVFFIPLIIIFHCYLFMFLAIRSTGRNVQKLGSTYNRKSNVSQSVKSEWKLAKIAFVAIVVFVLSWSPYACVTLIAWAGYAKTLNPYSKSVPAVIAKASAIYNPIIYAIIHPRYRRTIRSAVPCLRFLIRISPSDLSTSSVNESSFRASMSSRHSFAARNKSSCVSSISAAETTWSDMELEPVEAARKKQQPHRSRSFSKQAEEETGLLLKTQSCNVLTGEKVAVSSISLHDPFERSFGENAPELLLRPSCLRTSSLPFGLNSSSTEENADTSDMEVQEQHQMEASSH</sequence>
<evidence type="ECO:0000250" key="1"/>
<evidence type="ECO:0000250" key="2">
    <source>
        <dbReference type="UniProtKB" id="Q9QXZ9"/>
    </source>
</evidence>
<evidence type="ECO:0000255" key="3"/>
<evidence type="ECO:0000255" key="4">
    <source>
        <dbReference type="PROSITE-ProRule" id="PRU00521"/>
    </source>
</evidence>
<evidence type="ECO:0000256" key="5">
    <source>
        <dbReference type="SAM" id="MobiDB-lite"/>
    </source>
</evidence>
<evidence type="ECO:0000269" key="6">
    <source>
    </source>
</evidence>
<evidence type="ECO:0000305" key="7"/>
<evidence type="ECO:0000312" key="8">
    <source>
        <dbReference type="EMBL" id="AAY34941.2"/>
    </source>
</evidence>
<protein>
    <recommendedName>
        <fullName>Melanopsin</fullName>
    </recommendedName>
    <alternativeName>
        <fullName>Opsin-4</fullName>
    </alternativeName>
</protein>
<name>OPN4_PODSI</name>
<proteinExistence type="evidence at transcript level"/>
<organism>
    <name type="scientific">Podarcis siculus</name>
    <name type="common">Italian wall lizard</name>
    <dbReference type="NCBI Taxonomy" id="65484"/>
    <lineage>
        <taxon>Eukaryota</taxon>
        <taxon>Metazoa</taxon>
        <taxon>Chordata</taxon>
        <taxon>Craniata</taxon>
        <taxon>Vertebrata</taxon>
        <taxon>Euteleostomi</taxon>
        <taxon>Lepidosauria</taxon>
        <taxon>Squamata</taxon>
        <taxon>Bifurcata</taxon>
        <taxon>Unidentata</taxon>
        <taxon>Episquamata</taxon>
        <taxon>Laterata</taxon>
        <taxon>Lacertibaenia</taxon>
        <taxon>Lacertidae</taxon>
        <taxon>Podarcis</taxon>
    </lineage>
</organism>
<comment type="function">
    <text evidence="2">Photoreceptor implicated in non-image-forming responses to light. May be able to isomerize covalently bound all-trans retinal back to 11-cis retinal (By similarity).</text>
</comment>
<comment type="subcellular location">
    <subcellularLocation>
        <location evidence="2">Cell membrane</location>
        <topology evidence="3">Multi-pass membrane protein</topology>
    </subcellularLocation>
</comment>
<comment type="tissue specificity">
    <text evidence="6">Highest level in the lateral eye. Low level in the brain.</text>
</comment>
<comment type="similarity">
    <text evidence="4">Belongs to the G-protein coupled receptor 1 family. Opsin subfamily.</text>
</comment>